<gene>
    <name type="ORF">DDB_G0292894</name>
</gene>
<organism>
    <name type="scientific">Dictyostelium discoideum</name>
    <name type="common">Social amoeba</name>
    <dbReference type="NCBI Taxonomy" id="44689"/>
    <lineage>
        <taxon>Eukaryota</taxon>
        <taxon>Amoebozoa</taxon>
        <taxon>Evosea</taxon>
        <taxon>Eumycetozoa</taxon>
        <taxon>Dictyostelia</taxon>
        <taxon>Dictyosteliales</taxon>
        <taxon>Dictyosteliaceae</taxon>
        <taxon>Dictyostelium</taxon>
    </lineage>
</organism>
<reference key="1">
    <citation type="journal article" date="2005" name="Nature">
        <title>The genome of the social amoeba Dictyostelium discoideum.</title>
        <authorList>
            <person name="Eichinger L."/>
            <person name="Pachebat J.A."/>
            <person name="Gloeckner G."/>
            <person name="Rajandream M.A."/>
            <person name="Sucgang R."/>
            <person name="Berriman M."/>
            <person name="Song J."/>
            <person name="Olsen R."/>
            <person name="Szafranski K."/>
            <person name="Xu Q."/>
            <person name="Tunggal B."/>
            <person name="Kummerfeld S."/>
            <person name="Madera M."/>
            <person name="Konfortov B.A."/>
            <person name="Rivero F."/>
            <person name="Bankier A.T."/>
            <person name="Lehmann R."/>
            <person name="Hamlin N."/>
            <person name="Davies R."/>
            <person name="Gaudet P."/>
            <person name="Fey P."/>
            <person name="Pilcher K."/>
            <person name="Chen G."/>
            <person name="Saunders D."/>
            <person name="Sodergren E.J."/>
            <person name="Davis P."/>
            <person name="Kerhornou A."/>
            <person name="Nie X."/>
            <person name="Hall N."/>
            <person name="Anjard C."/>
            <person name="Hemphill L."/>
            <person name="Bason N."/>
            <person name="Farbrother P."/>
            <person name="Desany B."/>
            <person name="Just E."/>
            <person name="Morio T."/>
            <person name="Rost R."/>
            <person name="Churcher C.M."/>
            <person name="Cooper J."/>
            <person name="Haydock S."/>
            <person name="van Driessche N."/>
            <person name="Cronin A."/>
            <person name="Goodhead I."/>
            <person name="Muzny D.M."/>
            <person name="Mourier T."/>
            <person name="Pain A."/>
            <person name="Lu M."/>
            <person name="Harper D."/>
            <person name="Lindsay R."/>
            <person name="Hauser H."/>
            <person name="James K.D."/>
            <person name="Quiles M."/>
            <person name="Madan Babu M."/>
            <person name="Saito T."/>
            <person name="Buchrieser C."/>
            <person name="Wardroper A."/>
            <person name="Felder M."/>
            <person name="Thangavelu M."/>
            <person name="Johnson D."/>
            <person name="Knights A."/>
            <person name="Loulseged H."/>
            <person name="Mungall K.L."/>
            <person name="Oliver K."/>
            <person name="Price C."/>
            <person name="Quail M.A."/>
            <person name="Urushihara H."/>
            <person name="Hernandez J."/>
            <person name="Rabbinowitsch E."/>
            <person name="Steffen D."/>
            <person name="Sanders M."/>
            <person name="Ma J."/>
            <person name="Kohara Y."/>
            <person name="Sharp S."/>
            <person name="Simmonds M.N."/>
            <person name="Spiegler S."/>
            <person name="Tivey A."/>
            <person name="Sugano S."/>
            <person name="White B."/>
            <person name="Walker D."/>
            <person name="Woodward J.R."/>
            <person name="Winckler T."/>
            <person name="Tanaka Y."/>
            <person name="Shaulsky G."/>
            <person name="Schleicher M."/>
            <person name="Weinstock G.M."/>
            <person name="Rosenthal A."/>
            <person name="Cox E.C."/>
            <person name="Chisholm R.L."/>
            <person name="Gibbs R.A."/>
            <person name="Loomis W.F."/>
            <person name="Platzer M."/>
            <person name="Kay R.R."/>
            <person name="Williams J.G."/>
            <person name="Dear P.H."/>
            <person name="Noegel A.A."/>
            <person name="Barrell B.G."/>
            <person name="Kuspa A."/>
        </authorList>
    </citation>
    <scope>NUCLEOTIDE SEQUENCE [LARGE SCALE GENOMIC DNA]</scope>
    <source>
        <strain>AX4</strain>
    </source>
</reference>
<name>OCDL_DICDI</name>
<comment type="similarity">
    <text evidence="1">Belongs to the ornithine cyclodeaminase/mu-crystallin family.</text>
</comment>
<feature type="chain" id="PRO_0000328262" description="Uncharacterized cyclodeaminase">
    <location>
        <begin position="1"/>
        <end position="368"/>
    </location>
</feature>
<sequence length="368" mass="40436">MLIIKESDVKKLISLKEVIDINEQVFIKESKEEVVCPERIILPVEKTQPQQDSNEPINKKQLVGNLYFKPSLVVDESVGIKIVGTFANNANKGLPTVPATIILNDIETGLANAVIGATYITGARTAAGSAISVKYLATESPETIFVFGSSLQAQLHIEMILLLKPTIKKVYISSRSKENVDKLIIQLKNENNYNNDAVEFNYCAATGAGDDKDIINRYLLEADIIVTATSSNEPLFNGHEVLSEKQRDFKKKPLLICAVGSSRPTNRELDSFTISNSNLIVDDVNSCMVSGELFIPINKENIITKSHILGKLSDVVSGKYKQQTTTTTSKSITVYKSSGTAIQDVATANYIYKKALQNNIGYNININD</sequence>
<protein>
    <recommendedName>
        <fullName>Uncharacterized cyclodeaminase</fullName>
        <ecNumber>4.3.1.-</ecNumber>
    </recommendedName>
</protein>
<proteinExistence type="inferred from homology"/>
<keyword id="KW-0456">Lyase</keyword>
<keyword id="KW-1185">Reference proteome</keyword>
<evidence type="ECO:0000305" key="1"/>
<dbReference type="EC" id="4.3.1.-"/>
<dbReference type="EMBL" id="AAFI02000197">
    <property type="protein sequence ID" value="EAL60996.1"/>
    <property type="molecule type" value="Genomic_DNA"/>
</dbReference>
<dbReference type="RefSeq" id="XP_629418.1">
    <property type="nucleotide sequence ID" value="XM_629416.1"/>
</dbReference>
<dbReference type="SMR" id="Q54CJ8"/>
<dbReference type="FunCoup" id="Q54CJ8">
    <property type="interactions" value="72"/>
</dbReference>
<dbReference type="STRING" id="44689.Q54CJ8"/>
<dbReference type="PaxDb" id="44689-DDB0305175"/>
<dbReference type="EnsemblProtists" id="EAL60996">
    <property type="protein sequence ID" value="EAL60996"/>
    <property type="gene ID" value="DDB_G0292894"/>
</dbReference>
<dbReference type="GeneID" id="8628937"/>
<dbReference type="KEGG" id="ddi:DDB_G0292894"/>
<dbReference type="dictyBase" id="DDB_G0292894"/>
<dbReference type="VEuPathDB" id="AmoebaDB:DDB_G0292894"/>
<dbReference type="eggNOG" id="KOG3007">
    <property type="taxonomic scope" value="Eukaryota"/>
</dbReference>
<dbReference type="HOGENOM" id="CLU_042088_3_1_1"/>
<dbReference type="InParanoid" id="Q54CJ8"/>
<dbReference type="OMA" id="VKIVNVH"/>
<dbReference type="PhylomeDB" id="Q54CJ8"/>
<dbReference type="Reactome" id="R-DDI-71064">
    <property type="pathway name" value="Lysine catabolism"/>
</dbReference>
<dbReference type="PRO" id="PR:Q54CJ8"/>
<dbReference type="Proteomes" id="UP000002195">
    <property type="component" value="Chromosome 6"/>
</dbReference>
<dbReference type="GO" id="GO:0005737">
    <property type="term" value="C:cytoplasm"/>
    <property type="evidence" value="ECO:0000318"/>
    <property type="project" value="GO_Central"/>
</dbReference>
<dbReference type="GO" id="GO:0016829">
    <property type="term" value="F:lyase activity"/>
    <property type="evidence" value="ECO:0007669"/>
    <property type="project" value="UniProtKB-KW"/>
</dbReference>
<dbReference type="FunFam" id="3.30.1780.10:FF:000002">
    <property type="entry name" value="Ornithine cyclodeaminase"/>
    <property type="match status" value="1"/>
</dbReference>
<dbReference type="FunFam" id="3.40.50.720:FF:001490">
    <property type="entry name" value="Uncharacterized cyclodeaminase"/>
    <property type="match status" value="1"/>
</dbReference>
<dbReference type="Gene3D" id="3.40.50.720">
    <property type="entry name" value="NAD(P)-binding Rossmann-like Domain"/>
    <property type="match status" value="1"/>
</dbReference>
<dbReference type="Gene3D" id="3.30.1780.10">
    <property type="entry name" value="ornithine cyclodeaminase, domain 1"/>
    <property type="match status" value="1"/>
</dbReference>
<dbReference type="InterPro" id="IPR036291">
    <property type="entry name" value="NAD(P)-bd_dom_sf"/>
</dbReference>
<dbReference type="InterPro" id="IPR003462">
    <property type="entry name" value="ODC_Mu_crystall"/>
</dbReference>
<dbReference type="InterPro" id="IPR023401">
    <property type="entry name" value="ODC_N"/>
</dbReference>
<dbReference type="PANTHER" id="PTHR13812">
    <property type="entry name" value="KETIMINE REDUCTASE MU-CRYSTALLIN"/>
    <property type="match status" value="1"/>
</dbReference>
<dbReference type="PANTHER" id="PTHR13812:SF19">
    <property type="entry name" value="KETIMINE REDUCTASE MU-CRYSTALLIN"/>
    <property type="match status" value="1"/>
</dbReference>
<dbReference type="Pfam" id="PF02423">
    <property type="entry name" value="OCD_Mu_crystall"/>
    <property type="match status" value="1"/>
</dbReference>
<dbReference type="PIRSF" id="PIRSF001439">
    <property type="entry name" value="CryM"/>
    <property type="match status" value="1"/>
</dbReference>
<dbReference type="SUPFAM" id="SSF51735">
    <property type="entry name" value="NAD(P)-binding Rossmann-fold domains"/>
    <property type="match status" value="1"/>
</dbReference>
<accession>Q54CJ8</accession>